<keyword id="KW-0028">Amino-acid biosynthesis</keyword>
<keyword id="KW-0057">Aromatic amino acid biosynthesis</keyword>
<keyword id="KW-0456">Lyase</keyword>
<keyword id="KW-0663">Pyridoxal phosphate</keyword>
<keyword id="KW-0822">Tryptophan biosynthesis</keyword>
<gene>
    <name evidence="1" type="primary">trpB</name>
    <name type="ordered locus">Shewana3_1516</name>
</gene>
<feature type="chain" id="PRO_1000018392" description="Tryptophan synthase beta chain">
    <location>
        <begin position="1"/>
        <end position="396"/>
    </location>
</feature>
<feature type="modified residue" description="N6-(pyridoxal phosphate)lysine" evidence="1">
    <location>
        <position position="88"/>
    </location>
</feature>
<accession>A0KVD1</accession>
<name>TRPB_SHESA</name>
<comment type="function">
    <text evidence="1">The beta subunit is responsible for the synthesis of L-tryptophan from indole and L-serine.</text>
</comment>
<comment type="catalytic activity">
    <reaction evidence="1">
        <text>(1S,2R)-1-C-(indol-3-yl)glycerol 3-phosphate + L-serine = D-glyceraldehyde 3-phosphate + L-tryptophan + H2O</text>
        <dbReference type="Rhea" id="RHEA:10532"/>
        <dbReference type="ChEBI" id="CHEBI:15377"/>
        <dbReference type="ChEBI" id="CHEBI:33384"/>
        <dbReference type="ChEBI" id="CHEBI:57912"/>
        <dbReference type="ChEBI" id="CHEBI:58866"/>
        <dbReference type="ChEBI" id="CHEBI:59776"/>
        <dbReference type="EC" id="4.2.1.20"/>
    </reaction>
</comment>
<comment type="cofactor">
    <cofactor evidence="1">
        <name>pyridoxal 5'-phosphate</name>
        <dbReference type="ChEBI" id="CHEBI:597326"/>
    </cofactor>
</comment>
<comment type="pathway">
    <text evidence="1">Amino-acid biosynthesis; L-tryptophan biosynthesis; L-tryptophan from chorismate: step 5/5.</text>
</comment>
<comment type="subunit">
    <text evidence="1">Tetramer of two alpha and two beta chains.</text>
</comment>
<comment type="similarity">
    <text evidence="1">Belongs to the TrpB family.</text>
</comment>
<protein>
    <recommendedName>
        <fullName evidence="1">Tryptophan synthase beta chain</fullName>
        <ecNumber evidence="1">4.2.1.20</ecNumber>
    </recommendedName>
</protein>
<proteinExistence type="inferred from homology"/>
<evidence type="ECO:0000255" key="1">
    <source>
        <dbReference type="HAMAP-Rule" id="MF_00133"/>
    </source>
</evidence>
<dbReference type="EC" id="4.2.1.20" evidence="1"/>
<dbReference type="EMBL" id="CP000469">
    <property type="protein sequence ID" value="ABK47750.1"/>
    <property type="molecule type" value="Genomic_DNA"/>
</dbReference>
<dbReference type="RefSeq" id="WP_011622240.1">
    <property type="nucleotide sequence ID" value="NC_008577.1"/>
</dbReference>
<dbReference type="SMR" id="A0KVD1"/>
<dbReference type="STRING" id="94122.Shewana3_1516"/>
<dbReference type="KEGG" id="shn:Shewana3_1516"/>
<dbReference type="eggNOG" id="COG0133">
    <property type="taxonomic scope" value="Bacteria"/>
</dbReference>
<dbReference type="HOGENOM" id="CLU_016734_3_1_6"/>
<dbReference type="OrthoDB" id="9766131at2"/>
<dbReference type="UniPathway" id="UPA00035">
    <property type="reaction ID" value="UER00044"/>
</dbReference>
<dbReference type="Proteomes" id="UP000002589">
    <property type="component" value="Chromosome"/>
</dbReference>
<dbReference type="GO" id="GO:0005737">
    <property type="term" value="C:cytoplasm"/>
    <property type="evidence" value="ECO:0007669"/>
    <property type="project" value="TreeGrafter"/>
</dbReference>
<dbReference type="GO" id="GO:0004834">
    <property type="term" value="F:tryptophan synthase activity"/>
    <property type="evidence" value="ECO:0007669"/>
    <property type="project" value="UniProtKB-UniRule"/>
</dbReference>
<dbReference type="CDD" id="cd06446">
    <property type="entry name" value="Trp-synth_B"/>
    <property type="match status" value="1"/>
</dbReference>
<dbReference type="FunFam" id="3.40.50.1100:FF:000001">
    <property type="entry name" value="Tryptophan synthase beta chain"/>
    <property type="match status" value="1"/>
</dbReference>
<dbReference type="FunFam" id="3.40.50.1100:FF:000004">
    <property type="entry name" value="Tryptophan synthase beta chain"/>
    <property type="match status" value="1"/>
</dbReference>
<dbReference type="Gene3D" id="3.40.50.1100">
    <property type="match status" value="2"/>
</dbReference>
<dbReference type="HAMAP" id="MF_00133">
    <property type="entry name" value="Trp_synth_beta"/>
    <property type="match status" value="1"/>
</dbReference>
<dbReference type="InterPro" id="IPR006653">
    <property type="entry name" value="Trp_synth_b_CS"/>
</dbReference>
<dbReference type="InterPro" id="IPR006654">
    <property type="entry name" value="Trp_synth_beta"/>
</dbReference>
<dbReference type="InterPro" id="IPR023026">
    <property type="entry name" value="Trp_synth_beta/beta-like"/>
</dbReference>
<dbReference type="InterPro" id="IPR001926">
    <property type="entry name" value="TrpB-like_PALP"/>
</dbReference>
<dbReference type="InterPro" id="IPR036052">
    <property type="entry name" value="TrpB-like_PALP_sf"/>
</dbReference>
<dbReference type="NCBIfam" id="TIGR00263">
    <property type="entry name" value="trpB"/>
    <property type="match status" value="1"/>
</dbReference>
<dbReference type="PANTHER" id="PTHR48077:SF3">
    <property type="entry name" value="TRYPTOPHAN SYNTHASE"/>
    <property type="match status" value="1"/>
</dbReference>
<dbReference type="PANTHER" id="PTHR48077">
    <property type="entry name" value="TRYPTOPHAN SYNTHASE-RELATED"/>
    <property type="match status" value="1"/>
</dbReference>
<dbReference type="Pfam" id="PF00291">
    <property type="entry name" value="PALP"/>
    <property type="match status" value="1"/>
</dbReference>
<dbReference type="PIRSF" id="PIRSF001413">
    <property type="entry name" value="Trp_syn_beta"/>
    <property type="match status" value="1"/>
</dbReference>
<dbReference type="SUPFAM" id="SSF53686">
    <property type="entry name" value="Tryptophan synthase beta subunit-like PLP-dependent enzymes"/>
    <property type="match status" value="1"/>
</dbReference>
<dbReference type="PROSITE" id="PS00168">
    <property type="entry name" value="TRP_SYNTHASE_BETA"/>
    <property type="match status" value="1"/>
</dbReference>
<organism>
    <name type="scientific">Shewanella sp. (strain ANA-3)</name>
    <dbReference type="NCBI Taxonomy" id="94122"/>
    <lineage>
        <taxon>Bacteria</taxon>
        <taxon>Pseudomonadati</taxon>
        <taxon>Pseudomonadota</taxon>
        <taxon>Gammaproteobacteria</taxon>
        <taxon>Alteromonadales</taxon>
        <taxon>Shewanellaceae</taxon>
        <taxon>Shewanella</taxon>
    </lineage>
</organism>
<sequence length="396" mass="42806">MSQLKLNPYFGEYGGMYVPQILVPALKQLENAFVEAQADESFQAEFTDLLKNYAGRPTALTLTRNLSPNPMVKIYLKREDLLHGGAHKTNQVLGQALLAKRMGKKEIIAETGAGQHGVATALACALLGLKCKVYMGAKDVARQSPNVFRMRLMGAEVIPVTSGSATLKDACNEAMRDWSGSYEKAHYLLGTAAGPHPFPTIVREFQRMIGEETKKQMLEREGRLPDAVIACVGGGSNAIGMFADFIDETSVELIGVEPAGKGIDTHMHGAPLKHGKTGIFFGMKAPLMQDSEGQIEESYSISAGLDFPSVGPQHAHLNAIGRARYESATDDEALEAFQLLARSEGIIPALESAHALAYALRLAKECTKETILVVNLSGRGDKDIFTVSDILNGKEE</sequence>
<reference key="1">
    <citation type="submission" date="2006-09" db="EMBL/GenBank/DDBJ databases">
        <title>Complete sequence of chromosome 1 of Shewanella sp. ANA-3.</title>
        <authorList>
            <person name="Copeland A."/>
            <person name="Lucas S."/>
            <person name="Lapidus A."/>
            <person name="Barry K."/>
            <person name="Detter J.C."/>
            <person name="Glavina del Rio T."/>
            <person name="Hammon N."/>
            <person name="Israni S."/>
            <person name="Dalin E."/>
            <person name="Tice H."/>
            <person name="Pitluck S."/>
            <person name="Chertkov O."/>
            <person name="Brettin T."/>
            <person name="Bruce D."/>
            <person name="Han C."/>
            <person name="Tapia R."/>
            <person name="Gilna P."/>
            <person name="Schmutz J."/>
            <person name="Larimer F."/>
            <person name="Land M."/>
            <person name="Hauser L."/>
            <person name="Kyrpides N."/>
            <person name="Kim E."/>
            <person name="Newman D."/>
            <person name="Salticov C."/>
            <person name="Konstantinidis K."/>
            <person name="Klappenback J."/>
            <person name="Tiedje J."/>
            <person name="Richardson P."/>
        </authorList>
    </citation>
    <scope>NUCLEOTIDE SEQUENCE [LARGE SCALE GENOMIC DNA]</scope>
    <source>
        <strain>ANA-3</strain>
    </source>
</reference>